<protein>
    <recommendedName>
        <fullName evidence="1">Chaperonin GroEL</fullName>
        <ecNumber evidence="1">5.6.1.7</ecNumber>
    </recommendedName>
    <alternativeName>
        <fullName evidence="1">60 kDa chaperonin</fullName>
    </alternativeName>
    <alternativeName>
        <fullName evidence="1">Chaperonin-60</fullName>
        <shortName evidence="1">Cpn60</shortName>
    </alternativeName>
</protein>
<dbReference type="EC" id="5.6.1.7" evidence="1"/>
<dbReference type="EMBL" id="BX571857">
    <property type="protein sequence ID" value="CAG43741.1"/>
    <property type="molecule type" value="Genomic_DNA"/>
</dbReference>
<dbReference type="RefSeq" id="WP_000240642.1">
    <property type="nucleotide sequence ID" value="NC_002953.3"/>
</dbReference>
<dbReference type="SMR" id="Q6G7S8"/>
<dbReference type="KEGG" id="sas:SAS1935"/>
<dbReference type="HOGENOM" id="CLU_016503_3_0_9"/>
<dbReference type="GO" id="GO:0005737">
    <property type="term" value="C:cytoplasm"/>
    <property type="evidence" value="ECO:0007669"/>
    <property type="project" value="UniProtKB-SubCell"/>
</dbReference>
<dbReference type="GO" id="GO:0005524">
    <property type="term" value="F:ATP binding"/>
    <property type="evidence" value="ECO:0007669"/>
    <property type="project" value="UniProtKB-UniRule"/>
</dbReference>
<dbReference type="GO" id="GO:0140662">
    <property type="term" value="F:ATP-dependent protein folding chaperone"/>
    <property type="evidence" value="ECO:0007669"/>
    <property type="project" value="InterPro"/>
</dbReference>
<dbReference type="GO" id="GO:0016853">
    <property type="term" value="F:isomerase activity"/>
    <property type="evidence" value="ECO:0007669"/>
    <property type="project" value="UniProtKB-KW"/>
</dbReference>
<dbReference type="GO" id="GO:0051082">
    <property type="term" value="F:unfolded protein binding"/>
    <property type="evidence" value="ECO:0007669"/>
    <property type="project" value="UniProtKB-UniRule"/>
</dbReference>
<dbReference type="GO" id="GO:0042026">
    <property type="term" value="P:protein refolding"/>
    <property type="evidence" value="ECO:0007669"/>
    <property type="project" value="UniProtKB-UniRule"/>
</dbReference>
<dbReference type="CDD" id="cd03344">
    <property type="entry name" value="GroEL"/>
    <property type="match status" value="1"/>
</dbReference>
<dbReference type="FunFam" id="1.10.560.10:FF:000001">
    <property type="entry name" value="60 kDa chaperonin"/>
    <property type="match status" value="1"/>
</dbReference>
<dbReference type="FunFam" id="3.50.7.10:FF:000001">
    <property type="entry name" value="60 kDa chaperonin"/>
    <property type="match status" value="1"/>
</dbReference>
<dbReference type="Gene3D" id="3.50.7.10">
    <property type="entry name" value="GroEL"/>
    <property type="match status" value="1"/>
</dbReference>
<dbReference type="Gene3D" id="1.10.560.10">
    <property type="entry name" value="GroEL-like equatorial domain"/>
    <property type="match status" value="1"/>
</dbReference>
<dbReference type="Gene3D" id="3.30.260.10">
    <property type="entry name" value="TCP-1-like chaperonin intermediate domain"/>
    <property type="match status" value="1"/>
</dbReference>
<dbReference type="HAMAP" id="MF_00600">
    <property type="entry name" value="CH60"/>
    <property type="match status" value="1"/>
</dbReference>
<dbReference type="InterPro" id="IPR018370">
    <property type="entry name" value="Chaperonin_Cpn60_CS"/>
</dbReference>
<dbReference type="InterPro" id="IPR001844">
    <property type="entry name" value="Cpn60/GroEL"/>
</dbReference>
<dbReference type="InterPro" id="IPR002423">
    <property type="entry name" value="Cpn60/GroEL/TCP-1"/>
</dbReference>
<dbReference type="InterPro" id="IPR027409">
    <property type="entry name" value="GroEL-like_apical_dom_sf"/>
</dbReference>
<dbReference type="InterPro" id="IPR027413">
    <property type="entry name" value="GROEL-like_equatorial_sf"/>
</dbReference>
<dbReference type="InterPro" id="IPR027410">
    <property type="entry name" value="TCP-1-like_intermed_sf"/>
</dbReference>
<dbReference type="NCBIfam" id="TIGR02348">
    <property type="entry name" value="GroEL"/>
    <property type="match status" value="1"/>
</dbReference>
<dbReference type="NCBIfam" id="NF000592">
    <property type="entry name" value="PRK00013.1"/>
    <property type="match status" value="1"/>
</dbReference>
<dbReference type="NCBIfam" id="NF009487">
    <property type="entry name" value="PRK12849.1"/>
    <property type="match status" value="1"/>
</dbReference>
<dbReference type="NCBIfam" id="NF009488">
    <property type="entry name" value="PRK12850.1"/>
    <property type="match status" value="1"/>
</dbReference>
<dbReference type="NCBIfam" id="NF009489">
    <property type="entry name" value="PRK12851.1"/>
    <property type="match status" value="1"/>
</dbReference>
<dbReference type="PANTHER" id="PTHR45633">
    <property type="entry name" value="60 KDA HEAT SHOCK PROTEIN, MITOCHONDRIAL"/>
    <property type="match status" value="1"/>
</dbReference>
<dbReference type="Pfam" id="PF00118">
    <property type="entry name" value="Cpn60_TCP1"/>
    <property type="match status" value="1"/>
</dbReference>
<dbReference type="PRINTS" id="PR00298">
    <property type="entry name" value="CHAPERONIN60"/>
</dbReference>
<dbReference type="SUPFAM" id="SSF52029">
    <property type="entry name" value="GroEL apical domain-like"/>
    <property type="match status" value="1"/>
</dbReference>
<dbReference type="SUPFAM" id="SSF48592">
    <property type="entry name" value="GroEL equatorial domain-like"/>
    <property type="match status" value="1"/>
</dbReference>
<dbReference type="SUPFAM" id="SSF54849">
    <property type="entry name" value="GroEL-intermediate domain like"/>
    <property type="match status" value="1"/>
</dbReference>
<dbReference type="PROSITE" id="PS00296">
    <property type="entry name" value="CHAPERONINS_CPN60"/>
    <property type="match status" value="1"/>
</dbReference>
<feature type="chain" id="PRO_0000063535" description="Chaperonin GroEL">
    <location>
        <begin position="1"/>
        <end position="538"/>
    </location>
</feature>
<feature type="binding site" evidence="1">
    <location>
        <begin position="29"/>
        <end position="32"/>
    </location>
    <ligand>
        <name>ATP</name>
        <dbReference type="ChEBI" id="CHEBI:30616"/>
    </ligand>
</feature>
<feature type="binding site" evidence="1">
    <location>
        <begin position="86"/>
        <end position="90"/>
    </location>
    <ligand>
        <name>ATP</name>
        <dbReference type="ChEBI" id="CHEBI:30616"/>
    </ligand>
</feature>
<feature type="binding site" evidence="1">
    <location>
        <position position="413"/>
    </location>
    <ligand>
        <name>ATP</name>
        <dbReference type="ChEBI" id="CHEBI:30616"/>
    </ligand>
</feature>
<feature type="binding site" evidence="1">
    <location>
        <begin position="476"/>
        <end position="478"/>
    </location>
    <ligand>
        <name>ATP</name>
        <dbReference type="ChEBI" id="CHEBI:30616"/>
    </ligand>
</feature>
<feature type="binding site" evidence="1">
    <location>
        <position position="492"/>
    </location>
    <ligand>
        <name>ATP</name>
        <dbReference type="ChEBI" id="CHEBI:30616"/>
    </ligand>
</feature>
<reference key="1">
    <citation type="journal article" date="2004" name="Proc. Natl. Acad. Sci. U.S.A.">
        <title>Complete genomes of two clinical Staphylococcus aureus strains: evidence for the rapid evolution of virulence and drug resistance.</title>
        <authorList>
            <person name="Holden M.T.G."/>
            <person name="Feil E.J."/>
            <person name="Lindsay J.A."/>
            <person name="Peacock S.J."/>
            <person name="Day N.P.J."/>
            <person name="Enright M.C."/>
            <person name="Foster T.J."/>
            <person name="Moore C.E."/>
            <person name="Hurst L."/>
            <person name="Atkin R."/>
            <person name="Barron A."/>
            <person name="Bason N."/>
            <person name="Bentley S.D."/>
            <person name="Chillingworth C."/>
            <person name="Chillingworth T."/>
            <person name="Churcher C."/>
            <person name="Clark L."/>
            <person name="Corton C."/>
            <person name="Cronin A."/>
            <person name="Doggett J."/>
            <person name="Dowd L."/>
            <person name="Feltwell T."/>
            <person name="Hance Z."/>
            <person name="Harris B."/>
            <person name="Hauser H."/>
            <person name="Holroyd S."/>
            <person name="Jagels K."/>
            <person name="James K.D."/>
            <person name="Lennard N."/>
            <person name="Line A."/>
            <person name="Mayes R."/>
            <person name="Moule S."/>
            <person name="Mungall K."/>
            <person name="Ormond D."/>
            <person name="Quail M.A."/>
            <person name="Rabbinowitsch E."/>
            <person name="Rutherford K.M."/>
            <person name="Sanders M."/>
            <person name="Sharp S."/>
            <person name="Simmonds M."/>
            <person name="Stevens K."/>
            <person name="Whitehead S."/>
            <person name="Barrell B.G."/>
            <person name="Spratt B.G."/>
            <person name="Parkhill J."/>
        </authorList>
    </citation>
    <scope>NUCLEOTIDE SEQUENCE [LARGE SCALE GENOMIC DNA]</scope>
    <source>
        <strain>MSSA476</strain>
    </source>
</reference>
<accession>Q6G7S8</accession>
<evidence type="ECO:0000255" key="1">
    <source>
        <dbReference type="HAMAP-Rule" id="MF_00600"/>
    </source>
</evidence>
<name>CH60_STAAS</name>
<organism>
    <name type="scientific">Staphylococcus aureus (strain MSSA476)</name>
    <dbReference type="NCBI Taxonomy" id="282459"/>
    <lineage>
        <taxon>Bacteria</taxon>
        <taxon>Bacillati</taxon>
        <taxon>Bacillota</taxon>
        <taxon>Bacilli</taxon>
        <taxon>Bacillales</taxon>
        <taxon>Staphylococcaceae</taxon>
        <taxon>Staphylococcus</taxon>
    </lineage>
</organism>
<keyword id="KW-0067">ATP-binding</keyword>
<keyword id="KW-0143">Chaperone</keyword>
<keyword id="KW-0963">Cytoplasm</keyword>
<keyword id="KW-0413">Isomerase</keyword>
<keyword id="KW-0547">Nucleotide-binding</keyword>
<sequence length="538" mass="57572">MVKQLKFSEDARQAMLRGVDQLANAVKVTIGPKGRNVVLDKEFTAPLITNDGVTIAKEIELEDPYENMGAKLVQEVANKTNEIAGDGTTTATVLAQAMIQEGLKNVTSGANPVGLRQGIDKAVKVAVEALHENSQKVENKNEIAQVGAISAADEEIGRYISEAMEKVGNDGVITIEESNGLNTELEVVEGMQFDRGYQSPYMVTDSDKMVAELERPYILVTDKKISSFQDILPLLEQVVQSNRPILIVADEVEGDALTNIVLNRMRGTFTAVAVKAPGFGDRRKAMLEDLAILTGAQVITDDLGLDLKDASIDMLGTASKVEVTKDNTTVVDGDGDENSIDARVSQLKSQIEETESDFDREKLQERLAKLAGGVAVIKVGAASETELKERKLRIEDALNSTRAAVEEGIVAGGGTALVNVYQKVSEIEAEGDIETGVNIVLKALTAPVRQIAENAGLEGSVIVERLKNAEPGVGFNAATNEWVNMLEAGIVDPTKVTRSALQHAASVAAMFLTTEAVVASIPEKNNDQPNMGGMPGMM</sequence>
<proteinExistence type="inferred from homology"/>
<comment type="function">
    <text evidence="1">Together with its co-chaperonin GroES, plays an essential role in assisting protein folding. The GroEL-GroES system forms a nano-cage that allows encapsulation of the non-native substrate proteins and provides a physical environment optimized to promote and accelerate protein folding.</text>
</comment>
<comment type="catalytic activity">
    <reaction evidence="1">
        <text>ATP + H2O + a folded polypeptide = ADP + phosphate + an unfolded polypeptide.</text>
        <dbReference type="EC" id="5.6.1.7"/>
    </reaction>
</comment>
<comment type="subunit">
    <text evidence="1">Forms a cylinder of 14 subunits composed of two heptameric rings stacked back-to-back. Interacts with the co-chaperonin GroES.</text>
</comment>
<comment type="subcellular location">
    <subcellularLocation>
        <location evidence="1">Cytoplasm</location>
    </subcellularLocation>
</comment>
<comment type="similarity">
    <text evidence="1">Belongs to the chaperonin (HSP60) family.</text>
</comment>
<gene>
    <name evidence="1" type="primary">groEL</name>
    <name evidence="1" type="synonym">groL</name>
    <name type="ordered locus">SAS1935</name>
</gene>